<dbReference type="EMBL" id="BX284604">
    <property type="protein sequence ID" value="CAA94359.2"/>
    <property type="molecule type" value="Genomic_DNA"/>
</dbReference>
<dbReference type="EMBL" id="BX284604">
    <property type="protein sequence ID" value="CAB54290.2"/>
    <property type="molecule type" value="Genomic_DNA"/>
</dbReference>
<dbReference type="PIR" id="T24101">
    <property type="entry name" value="T24101"/>
</dbReference>
<dbReference type="PIR" id="T24105">
    <property type="entry name" value="T24105"/>
</dbReference>
<dbReference type="RefSeq" id="NP_501980.2">
    <molecule id="Q9U389-1"/>
    <property type="nucleotide sequence ID" value="NM_069579.6"/>
</dbReference>
<dbReference type="RefSeq" id="NP_501981.2">
    <molecule id="Q9U389-2"/>
    <property type="nucleotide sequence ID" value="NM_069580.7"/>
</dbReference>
<dbReference type="SMR" id="Q9U389"/>
<dbReference type="DIP" id="DIP-26223N"/>
<dbReference type="FunCoup" id="Q9U389">
    <property type="interactions" value="76"/>
</dbReference>
<dbReference type="IntAct" id="Q9U389">
    <property type="interactions" value="7"/>
</dbReference>
<dbReference type="STRING" id="6239.R102.5b.1"/>
<dbReference type="iPTMnet" id="Q9U389"/>
<dbReference type="PaxDb" id="6239-R102.5b"/>
<dbReference type="PeptideAtlas" id="Q9U389"/>
<dbReference type="EnsemblMetazoa" id="R102.5a.1">
    <molecule id="Q9U389-2"/>
    <property type="protein sequence ID" value="R102.5a.1"/>
    <property type="gene ID" value="WBGene00011292"/>
</dbReference>
<dbReference type="EnsemblMetazoa" id="R102.5b.1">
    <molecule id="Q9U389-1"/>
    <property type="protein sequence ID" value="R102.5b.1"/>
    <property type="gene ID" value="WBGene00011292"/>
</dbReference>
<dbReference type="GeneID" id="177962"/>
<dbReference type="KEGG" id="cel:CELE_R102.5"/>
<dbReference type="UCSC" id="R102.5a.1">
    <property type="organism name" value="c. elegans"/>
</dbReference>
<dbReference type="AGR" id="WB:WBGene00011292"/>
<dbReference type="CTD" id="177962"/>
<dbReference type="WormBase" id="R102.5a">
    <molecule id="Q9U389-2"/>
    <property type="protein sequence ID" value="CE35601"/>
    <property type="gene ID" value="WBGene00011292"/>
    <property type="gene designation" value="allo-1"/>
</dbReference>
<dbReference type="WormBase" id="R102.5b">
    <molecule id="Q9U389-1"/>
    <property type="protein sequence ID" value="CE35602"/>
    <property type="gene ID" value="WBGene00011292"/>
    <property type="gene designation" value="allo-1"/>
</dbReference>
<dbReference type="eggNOG" id="ENOG502TG4U">
    <property type="taxonomic scope" value="Eukaryota"/>
</dbReference>
<dbReference type="HOGENOM" id="CLU_061875_0_0_1"/>
<dbReference type="InParanoid" id="Q9U389"/>
<dbReference type="OMA" id="HELAGPT"/>
<dbReference type="OrthoDB" id="5823310at2759"/>
<dbReference type="PhylomeDB" id="Q9U389"/>
<dbReference type="PRO" id="PR:Q9U389"/>
<dbReference type="Proteomes" id="UP000001940">
    <property type="component" value="Chromosome IV"/>
</dbReference>
<dbReference type="Bgee" id="WBGene00011292">
    <property type="expression patterns" value="Expressed in adult organism and 4 other cell types or tissues"/>
</dbReference>
<dbReference type="GO" id="GO:0005737">
    <property type="term" value="C:cytoplasm"/>
    <property type="evidence" value="ECO:0000314"/>
    <property type="project" value="UniProtKB"/>
</dbReference>
<dbReference type="GO" id="GO:0005783">
    <property type="term" value="C:endoplasmic reticulum"/>
    <property type="evidence" value="ECO:0007005"/>
    <property type="project" value="WormBase"/>
</dbReference>
<dbReference type="GO" id="GO:0030017">
    <property type="term" value="C:sarcomere"/>
    <property type="evidence" value="ECO:0007005"/>
    <property type="project" value="WormBase"/>
</dbReference>
<dbReference type="GO" id="GO:0055120">
    <property type="term" value="C:striated muscle dense body"/>
    <property type="evidence" value="ECO:0007005"/>
    <property type="project" value="WormBase"/>
</dbReference>
<dbReference type="GO" id="GO:0042803">
    <property type="term" value="F:protein homodimerization activity"/>
    <property type="evidence" value="ECO:0000314"/>
    <property type="project" value="UniProtKB"/>
</dbReference>
<dbReference type="GO" id="GO:0000045">
    <property type="term" value="P:autophagosome assembly"/>
    <property type="evidence" value="ECO:0000315"/>
    <property type="project" value="UniProtKB"/>
</dbReference>
<dbReference type="GO" id="GO:0010506">
    <property type="term" value="P:regulation of autophagy"/>
    <property type="evidence" value="ECO:0000315"/>
    <property type="project" value="UniProtKB"/>
</dbReference>
<proteinExistence type="evidence at protein level"/>
<protein>
    <recommendedName>
        <fullName evidence="5">Allophagy receptor allo-1</fullName>
    </recommendedName>
</protein>
<evidence type="ECO:0000255" key="1"/>
<evidence type="ECO:0000256" key="2">
    <source>
        <dbReference type="SAM" id="MobiDB-lite"/>
    </source>
</evidence>
<evidence type="ECO:0000269" key="3">
    <source>
    </source>
</evidence>
<evidence type="ECO:0000303" key="4">
    <source>
    </source>
</evidence>
<evidence type="ECO:0000305" key="5"/>
<evidence type="ECO:0000312" key="6">
    <source>
        <dbReference type="Proteomes" id="UP000001940"/>
    </source>
</evidence>
<evidence type="ECO:0000312" key="7">
    <source>
        <dbReference type="WormBase" id="R102.5a"/>
    </source>
</evidence>
<evidence type="ECO:0000312" key="8">
    <source>
        <dbReference type="WormBase" id="R102.5b"/>
    </source>
</evidence>
<keyword id="KW-0025">Alternative splicing</keyword>
<keyword id="KW-0072">Autophagy</keyword>
<keyword id="KW-0175">Coiled coil</keyword>
<keyword id="KW-0963">Cytoplasm</keyword>
<keyword id="KW-0597">Phosphoprotein</keyword>
<keyword id="KW-1185">Reference proteome</keyword>
<gene>
    <name evidence="4 8" type="primary">allo-1</name>
    <name evidence="8" type="ORF">R102.5</name>
</gene>
<feature type="chain" id="PRO_0000444320" description="Allophagy receptor allo-1" evidence="5">
    <location>
        <begin position="1"/>
        <end position="402"/>
    </location>
</feature>
<feature type="region of interest" description="Disordered" evidence="2">
    <location>
        <begin position="1"/>
        <end position="79"/>
    </location>
</feature>
<feature type="region of interest" description="Disordered" evidence="2">
    <location>
        <begin position="356"/>
        <end position="381"/>
    </location>
</feature>
<feature type="coiled-coil region" evidence="1">
    <location>
        <begin position="168"/>
        <end position="347"/>
    </location>
</feature>
<feature type="short sequence motif" description="LIR" evidence="5">
    <location>
        <begin position="13"/>
        <end position="16"/>
    </location>
</feature>
<feature type="compositionally biased region" description="Acidic residues" evidence="2">
    <location>
        <begin position="9"/>
        <end position="27"/>
    </location>
</feature>
<feature type="compositionally biased region" description="Polar residues" evidence="2">
    <location>
        <begin position="44"/>
        <end position="54"/>
    </location>
</feature>
<feature type="compositionally biased region" description="Basic and acidic residues" evidence="2">
    <location>
        <begin position="64"/>
        <end position="75"/>
    </location>
</feature>
<feature type="compositionally biased region" description="Basic and acidic residues" evidence="2">
    <location>
        <begin position="361"/>
        <end position="371"/>
    </location>
</feature>
<feature type="compositionally biased region" description="Polar residues" evidence="2">
    <location>
        <begin position="372"/>
        <end position="381"/>
    </location>
</feature>
<feature type="modified residue" description="Phosphothreonine; by IKKE" evidence="3">
    <location>
        <position position="74"/>
    </location>
</feature>
<feature type="splice variant" id="VSP_059584" description="In isoform a." evidence="5">
    <original>LAGPTGEHPHARFERAGDQQSEAEMSSTWSAGRL</original>
    <variation>DQQESTRMLASNEQVINSLKQKCRQLGVLEDFSS</variation>
    <location>
        <begin position="355"/>
        <end position="388"/>
    </location>
</feature>
<feature type="splice variant" id="VSP_059585" description="In isoform a." evidence="5">
    <location>
        <begin position="389"/>
        <end position="402"/>
    </location>
</feature>
<feature type="mutagenesis site" description="Impairs binding to lgg-1. Does not affect accumulation on paternal organelles in embryos, but lgg-1 is not recruited and paternal mitochondria are retained and are not cleared." evidence="3">
    <original>FEII</original>
    <variation>AEIA</variation>
    <location>
        <begin position="13"/>
        <end position="16"/>
    </location>
</feature>
<feature type="mutagenesis site" description="Reduces phosphorylation. Localizes to paternal organelles in 1-cell stage embryos, but does not completely rescue the defects and clearance of paternal organelles in the allo-1 tm4756 mutant." evidence="3">
    <original>T</original>
    <variation>A</variation>
    <location>
        <position position="74"/>
    </location>
</feature>
<feature type="mutagenesis site" description="Does not rescue the defects in paternal mitochondrial clearance in the ikke-1 gk1264 mutant." evidence="3">
    <original>T</original>
    <variation>D</variation>
    <location>
        <position position="74"/>
    </location>
</feature>
<organism evidence="6">
    <name type="scientific">Caenorhabditis elegans</name>
    <dbReference type="NCBI Taxonomy" id="6239"/>
    <lineage>
        <taxon>Eukaryota</taxon>
        <taxon>Metazoa</taxon>
        <taxon>Ecdysozoa</taxon>
        <taxon>Nematoda</taxon>
        <taxon>Chromadorea</taxon>
        <taxon>Rhabditida</taxon>
        <taxon>Rhabditina</taxon>
        <taxon>Rhabditomorpha</taxon>
        <taxon>Rhabditoidea</taxon>
        <taxon>Rhabditidae</taxon>
        <taxon>Peloderinae</taxon>
        <taxon>Caenorhabditis</taxon>
    </lineage>
</organism>
<sequence>MNDPLDSLSNDEFEIIETFDPETEDREDQWSIQQSIRIEPISIQMPNTLQSQRAPSPVGSKAPESLKDEDPDRTPEASIVETPLLTETLKEDRTPMSTPLASLVNSSQSPEFTLQNMSIVSESECSNNSSLVNVADVESTEIALRTSLLLVSELKSQLQAAKMSESTLLKSNSNHEIEENKKLSEKMEVMKNEFELKMQESAASVEKVIQEKDSAIEQLKVQLAQSQQVAELWKQGAEKNSNAQYSDSKTTIDRLLEENSKLRNLVDEEVARRLEESERRKLAEDQLKHARGGSVFDPPASFVASQLAERTTYSLNLEHELITLRKELEETKEALKKSVEESSNKDEIVSALHELAGPTGEHPHARFERAGDQQSEAEMSSTWSAGRLLELSRQIVHFISHQ</sequence>
<accession>Q9U389</accession>
<accession>Q21891</accession>
<reference evidence="6" key="1">
    <citation type="journal article" date="1998" name="Science">
        <title>Genome sequence of the nematode C. elegans: a platform for investigating biology.</title>
        <authorList>
            <consortium name="The C. elegans sequencing consortium"/>
        </authorList>
    </citation>
    <scope>NUCLEOTIDE SEQUENCE [LARGE SCALE GENOMIC DNA]</scope>
    <source>
        <strain evidence="6">Bristol N2</strain>
    </source>
</reference>
<reference evidence="5" key="2">
    <citation type="journal article" date="2018" name="Nat. Cell Biol.">
        <title>The autophagy receptor ALLO-1 and the IKKE-1 kinase control clearance of paternal mitochondria in Caenorhabditis elegans.</title>
        <authorList>
            <person name="Sato M."/>
            <person name="Sato K."/>
            <person name="Tomura K."/>
            <person name="Kosako H."/>
            <person name="Sato K."/>
        </authorList>
    </citation>
    <scope>FUNCTION</scope>
    <scope>IDENTIFICATION BY MASS SPECTROMETRY</scope>
    <scope>INTERACTION WITH IKKE-1; LGG-1 AND UBIQUITINATED PROTEINS</scope>
    <scope>SUBUNIT</scope>
    <scope>SUBCELLULAR LOCATION</scope>
    <scope>TISSUE SPECIFICITY</scope>
    <scope>DOMAIN</scope>
    <scope>PROTEOLYTIC DEGRADATION</scope>
    <scope>PHOSPHORYLATION AT THR-74</scope>
    <scope>MUTAGENESIS OF 13-PHE--ILE-16 AND THR-74</scope>
</reference>
<comment type="function">
    <text evidence="3">Autophagy receptor, which is required for allophagy, an autophagic process in which paternal organelles, including mitochondria and membranous organelles, are degraded in early embryos. After fertilization, recruited to ubiquitin-modified paternal organelles and is required for the formation of autophagosomes around the paternal organelles. Also plays a role in the regulation of autophagy in germ cells.</text>
</comment>
<comment type="subunit">
    <text evidence="3">Self-associates. Interacts (via N-terminus) with ikke-1; the interaction is direct. Interacts (via the LIR motif) with lgg-1. Interacts (via C-terminus) with ubiquitinated proteins.</text>
</comment>
<comment type="interaction">
    <interactant intactId="EBI-312154">
        <id>Q9U389</id>
    </interactant>
    <interactant intactId="EBI-312149">
        <id>P34605</id>
        <label>trpp-3</label>
    </interactant>
    <organismsDiffer>false</organismsDiffer>
    <experiments>2</experiments>
</comment>
<comment type="subcellular location">
    <subcellularLocation>
        <location evidence="3">Cytoplasm</location>
    </subcellularLocation>
    <text evidence="3">Localizes to cytoplasmic puncta in oocytes and to paternal organelles in 1-stage embryos. After fertilization, localizes around paternal mitochondria and ubiquitinated membranous organelles at metaphase phase of meiosis I, before lgg-1 is recruited. Also, localizes to paternal organelles during meiosis II. Co-localizes with ikke-1 in embryos and oocytes.</text>
</comment>
<comment type="alternative products">
    <event type="alternative splicing"/>
    <isoform>
        <id>Q9U389-1</id>
        <name evidence="8">b</name>
        <sequence type="displayed"/>
    </isoform>
    <isoform>
        <id>Q9U389-2</id>
        <name evidence="7">a</name>
        <sequence type="described" ref="VSP_059584 VSP_059585"/>
    </isoform>
</comment>
<comment type="tissue specificity">
    <text evidence="3">Expressed in oocytes, but not in spermatozoa.</text>
</comment>
<comment type="domain">
    <text evidence="3">The C-terminal region is required for localization to paternal organelles.</text>
</comment>
<comment type="PTM">
    <text evidence="3">Phosphorylation on Thr-74 by ikke-1 is required for allophagic function.</text>
</comment>
<name>ALLO1_CAEEL</name>